<name>VKT2_BITGA</name>
<accession>Q6T6S5</accession>
<feature type="signal peptide" evidence="3">
    <location>
        <begin position="1"/>
        <end position="24"/>
    </location>
</feature>
<feature type="chain" id="PRO_0000377460" description="Kunitz-type serine protease inhibitor bitisilin-2">
    <location>
        <begin position="25"/>
        <end position="90"/>
    </location>
</feature>
<feature type="domain" description="BPTI/Kunitz inhibitor" evidence="2">
    <location>
        <begin position="31"/>
        <end position="81"/>
    </location>
</feature>
<feature type="site" description="Reactive bond for chymotrypsin" evidence="1">
    <location>
        <begin position="41"/>
        <end position="42"/>
    </location>
</feature>
<feature type="disulfide bond" evidence="2">
    <location>
        <begin position="31"/>
        <end position="81"/>
    </location>
</feature>
<feature type="disulfide bond" evidence="2">
    <location>
        <begin position="40"/>
        <end position="64"/>
    </location>
</feature>
<feature type="disulfide bond" evidence="2">
    <location>
        <begin position="56"/>
        <end position="77"/>
    </location>
</feature>
<protein>
    <recommendedName>
        <fullName>Kunitz-type serine protease inhibitor bitisilin-2</fullName>
    </recommendedName>
    <alternativeName>
        <fullName>BG-15</fullName>
    </alternativeName>
    <alternativeName>
        <fullName>Kunitz protease inhibitor 2</fullName>
    </alternativeName>
</protein>
<proteinExistence type="evidence at protein level"/>
<sequence length="90" mass="10007">MSSGGLLLLLGLLTLWAELTPVSGKKRPDFCYLPADTGPCMANFPRFYYDSASKKCKKFTYGGCHGNANNFETREECRKKCFASAARRPT</sequence>
<reference key="1">
    <citation type="journal article" date="2004" name="Gene">
        <title>Bitis gabonica (Gaboon viper) snake venom gland: toward a catalog for the full-length transcripts (cDNA) and proteins.</title>
        <authorList>
            <person name="Francischetti I.M.B."/>
            <person name="My-Pham V."/>
            <person name="Harrison J."/>
            <person name="Garfield M.K."/>
            <person name="Ribeiro J.M.C."/>
        </authorList>
    </citation>
    <scope>NUCLEOTIDE SEQUENCE [MRNA]</scope>
    <scope>PROTEIN SEQUENCE OF 25-43</scope>
    <source>
        <tissue>Venom</tissue>
        <tissue>Venom gland</tissue>
    </source>
</reference>
<organism>
    <name type="scientific">Bitis gabonica</name>
    <name type="common">Gaboon adder</name>
    <name type="synonym">Gaboon viper</name>
    <dbReference type="NCBI Taxonomy" id="8694"/>
    <lineage>
        <taxon>Eukaryota</taxon>
        <taxon>Metazoa</taxon>
        <taxon>Chordata</taxon>
        <taxon>Craniata</taxon>
        <taxon>Vertebrata</taxon>
        <taxon>Euteleostomi</taxon>
        <taxon>Lepidosauria</taxon>
        <taxon>Squamata</taxon>
        <taxon>Bifurcata</taxon>
        <taxon>Unidentata</taxon>
        <taxon>Episquamata</taxon>
        <taxon>Toxicofera</taxon>
        <taxon>Serpentes</taxon>
        <taxon>Colubroidea</taxon>
        <taxon>Viperidae</taxon>
        <taxon>Viperinae</taxon>
        <taxon>Bitis</taxon>
    </lineage>
</organism>
<keyword id="KW-0903">Direct protein sequencing</keyword>
<keyword id="KW-1015">Disulfide bond</keyword>
<keyword id="KW-0646">Protease inhibitor</keyword>
<keyword id="KW-0964">Secreted</keyword>
<keyword id="KW-0722">Serine protease inhibitor</keyword>
<keyword id="KW-0732">Signal</keyword>
<comment type="function">
    <text evidence="1">Serine protease inhibitor.</text>
</comment>
<comment type="subcellular location">
    <subcellularLocation>
        <location evidence="1">Secreted</location>
    </subcellularLocation>
</comment>
<comment type="tissue specificity">
    <text>Expressed by the venom gland.</text>
</comment>
<comment type="similarity">
    <text evidence="4">Belongs to the venom Kunitz-type family.</text>
</comment>
<evidence type="ECO:0000250" key="1"/>
<evidence type="ECO:0000255" key="2">
    <source>
        <dbReference type="PROSITE-ProRule" id="PRU00031"/>
    </source>
</evidence>
<evidence type="ECO:0000269" key="3">
    <source>
    </source>
</evidence>
<evidence type="ECO:0000305" key="4"/>
<dbReference type="EMBL" id="AY430413">
    <property type="protein sequence ID" value="AAR24535.1"/>
    <property type="molecule type" value="mRNA"/>
</dbReference>
<dbReference type="SMR" id="Q6T6S5"/>
<dbReference type="MEROPS" id="I02.062"/>
<dbReference type="GO" id="GO:0005615">
    <property type="term" value="C:extracellular space"/>
    <property type="evidence" value="ECO:0007669"/>
    <property type="project" value="TreeGrafter"/>
</dbReference>
<dbReference type="GO" id="GO:0004867">
    <property type="term" value="F:serine-type endopeptidase inhibitor activity"/>
    <property type="evidence" value="ECO:0007669"/>
    <property type="project" value="UniProtKB-KW"/>
</dbReference>
<dbReference type="CDD" id="cd22608">
    <property type="entry name" value="Kunitz_PPTI-like"/>
    <property type="match status" value="1"/>
</dbReference>
<dbReference type="FunFam" id="4.10.410.10:FF:000021">
    <property type="entry name" value="Serine protease inhibitor, putative"/>
    <property type="match status" value="1"/>
</dbReference>
<dbReference type="Gene3D" id="4.10.410.10">
    <property type="entry name" value="Pancreatic trypsin inhibitor Kunitz domain"/>
    <property type="match status" value="1"/>
</dbReference>
<dbReference type="InterPro" id="IPR002223">
    <property type="entry name" value="Kunitz_BPTI"/>
</dbReference>
<dbReference type="InterPro" id="IPR036880">
    <property type="entry name" value="Kunitz_BPTI_sf"/>
</dbReference>
<dbReference type="InterPro" id="IPR020901">
    <property type="entry name" value="Prtase_inh_Kunz-CS"/>
</dbReference>
<dbReference type="InterPro" id="IPR050098">
    <property type="entry name" value="TFPI/VKTCI-like"/>
</dbReference>
<dbReference type="PANTHER" id="PTHR10083">
    <property type="entry name" value="KUNITZ-TYPE PROTEASE INHIBITOR-RELATED"/>
    <property type="match status" value="1"/>
</dbReference>
<dbReference type="PANTHER" id="PTHR10083:SF328">
    <property type="entry name" value="TISSUE FACTOR PATHWAY INHIBITOR"/>
    <property type="match status" value="1"/>
</dbReference>
<dbReference type="Pfam" id="PF00014">
    <property type="entry name" value="Kunitz_BPTI"/>
    <property type="match status" value="1"/>
</dbReference>
<dbReference type="PRINTS" id="PR00759">
    <property type="entry name" value="BASICPTASE"/>
</dbReference>
<dbReference type="SMART" id="SM00131">
    <property type="entry name" value="KU"/>
    <property type="match status" value="1"/>
</dbReference>
<dbReference type="SUPFAM" id="SSF57362">
    <property type="entry name" value="BPTI-like"/>
    <property type="match status" value="1"/>
</dbReference>
<dbReference type="PROSITE" id="PS00280">
    <property type="entry name" value="BPTI_KUNITZ_1"/>
    <property type="match status" value="1"/>
</dbReference>
<dbReference type="PROSITE" id="PS50279">
    <property type="entry name" value="BPTI_KUNITZ_2"/>
    <property type="match status" value="1"/>
</dbReference>